<feature type="chain" id="PRO_0000304185" description="Geranylgeranylglyceryl phosphate synthase">
    <location>
        <begin position="1"/>
        <end position="243"/>
    </location>
</feature>
<feature type="binding site" evidence="1">
    <location>
        <position position="22"/>
    </location>
    <ligand>
        <name>Mg(2+)</name>
        <dbReference type="ChEBI" id="CHEBI:18420"/>
    </ligand>
</feature>
<feature type="binding site" evidence="1">
    <location>
        <position position="51"/>
    </location>
    <ligand>
        <name>Mg(2+)</name>
        <dbReference type="ChEBI" id="CHEBI:18420"/>
    </ligand>
</feature>
<feature type="binding site" evidence="1">
    <location>
        <begin position="169"/>
        <end position="175"/>
    </location>
    <ligand>
        <name>sn-glycerol 1-phosphate</name>
        <dbReference type="ChEBI" id="CHEBI:57685"/>
    </ligand>
</feature>
<feature type="binding site" evidence="1">
    <location>
        <begin position="200"/>
        <end position="201"/>
    </location>
    <ligand>
        <name>sn-glycerol 1-phosphate</name>
        <dbReference type="ChEBI" id="CHEBI:57685"/>
    </ligand>
</feature>
<feature type="binding site" evidence="1">
    <location>
        <begin position="222"/>
        <end position="223"/>
    </location>
    <ligand>
        <name>sn-glycerol 1-phosphate</name>
        <dbReference type="ChEBI" id="CHEBI:57685"/>
    </ligand>
</feature>
<gene>
    <name type="ordered locus">Msp_1291</name>
</gene>
<sequence>MNIENYLNETLKEHKLHFTLIDPDEQTPQEAVEIAKQAKKARSDAILVGGSITDQEDLNITVKSIKEEVDLPVILFPGNISGVSKYADALLFMSLLNSTNPYWITGAQALSAPSIKKMGIETIPMGYLIIEPGGTVGWVGDSKPIPRKKSDLAVAYALAAEFLGMRVIYLEAGSGADSHIPVDFIMKVKKLTNLMVIVGGGIKTAQDALEVKEAGADIIITGTVVEETDDTYKKIKELTDVIH</sequence>
<comment type="function">
    <text evidence="1">Prenyltransferase that catalyzes the transfer of the geranylgeranyl moiety of geranylgeranyl diphosphate (GGPP) to the C3 hydroxyl of sn-glycerol-1-phosphate (G1P). This reaction is the first ether-bond-formation step in the biosynthesis of archaeal membrane lipids.</text>
</comment>
<comment type="catalytic activity">
    <reaction evidence="1">
        <text>sn-glycerol 1-phosphate + (2E,6E,10E)-geranylgeranyl diphosphate = sn-3-O-(geranylgeranyl)glycerol 1-phosphate + diphosphate</text>
        <dbReference type="Rhea" id="RHEA:23404"/>
        <dbReference type="ChEBI" id="CHEBI:33019"/>
        <dbReference type="ChEBI" id="CHEBI:57677"/>
        <dbReference type="ChEBI" id="CHEBI:57685"/>
        <dbReference type="ChEBI" id="CHEBI:58756"/>
        <dbReference type="EC" id="2.5.1.41"/>
    </reaction>
</comment>
<comment type="cofactor">
    <cofactor evidence="1">
        <name>Mg(2+)</name>
        <dbReference type="ChEBI" id="CHEBI:18420"/>
    </cofactor>
</comment>
<comment type="pathway">
    <text evidence="1">Membrane lipid metabolism; glycerophospholipid metabolism.</text>
</comment>
<comment type="subcellular location">
    <subcellularLocation>
        <location evidence="1">Cytoplasm</location>
    </subcellularLocation>
</comment>
<comment type="similarity">
    <text evidence="1">Belongs to the GGGP/HepGP synthase family. Group II subfamily.</text>
</comment>
<proteinExistence type="inferred from homology"/>
<name>GGGPS_METST</name>
<reference key="1">
    <citation type="journal article" date="2006" name="J. Bacteriol.">
        <title>The genome sequence of Methanosphaera stadtmanae reveals why this human intestinal archaeon is restricted to methanol and H2 for methane formation and ATP synthesis.</title>
        <authorList>
            <person name="Fricke W.F."/>
            <person name="Seedorf H."/>
            <person name="Henne A."/>
            <person name="Kruer M."/>
            <person name="Liesegang H."/>
            <person name="Hedderich R."/>
            <person name="Gottschalk G."/>
            <person name="Thauer R.K."/>
        </authorList>
    </citation>
    <scope>NUCLEOTIDE SEQUENCE [LARGE SCALE GENOMIC DNA]</scope>
    <source>
        <strain>ATCC 43021 / DSM 3091 / JCM 11832 / MCB-3</strain>
    </source>
</reference>
<evidence type="ECO:0000255" key="1">
    <source>
        <dbReference type="HAMAP-Rule" id="MF_00112"/>
    </source>
</evidence>
<protein>
    <recommendedName>
        <fullName evidence="1">Geranylgeranylglyceryl phosphate synthase</fullName>
        <shortName evidence="1">GGGP synthase</shortName>
        <shortName evidence="1">GGGPS</shortName>
        <ecNumber evidence="1">2.5.1.41</ecNumber>
    </recommendedName>
    <alternativeName>
        <fullName evidence="1">(S)-3-O-geranylgeranylglyceryl phosphate synthase</fullName>
    </alternativeName>
    <alternativeName>
        <fullName evidence="1">Phosphoglycerol geranylgeranyltransferase</fullName>
    </alternativeName>
</protein>
<dbReference type="EC" id="2.5.1.41" evidence="1"/>
<dbReference type="EMBL" id="CP000102">
    <property type="protein sequence ID" value="ABC57668.1"/>
    <property type="molecule type" value="Genomic_DNA"/>
</dbReference>
<dbReference type="RefSeq" id="WP_011406867.1">
    <property type="nucleotide sequence ID" value="NC_007681.1"/>
</dbReference>
<dbReference type="SMR" id="Q2NET5"/>
<dbReference type="STRING" id="339860.Msp_1291"/>
<dbReference type="KEGG" id="mst:Msp_1291"/>
<dbReference type="eggNOG" id="arCOG01085">
    <property type="taxonomic scope" value="Archaea"/>
</dbReference>
<dbReference type="HOGENOM" id="CLU_068610_0_0_2"/>
<dbReference type="OrthoDB" id="7409at2157"/>
<dbReference type="UniPathway" id="UPA00940"/>
<dbReference type="Proteomes" id="UP000001931">
    <property type="component" value="Chromosome"/>
</dbReference>
<dbReference type="GO" id="GO:0005737">
    <property type="term" value="C:cytoplasm"/>
    <property type="evidence" value="ECO:0007669"/>
    <property type="project" value="UniProtKB-SubCell"/>
</dbReference>
<dbReference type="GO" id="GO:0000107">
    <property type="term" value="F:imidazoleglycerol-phosphate synthase activity"/>
    <property type="evidence" value="ECO:0007669"/>
    <property type="project" value="TreeGrafter"/>
</dbReference>
<dbReference type="GO" id="GO:0000287">
    <property type="term" value="F:magnesium ion binding"/>
    <property type="evidence" value="ECO:0007669"/>
    <property type="project" value="UniProtKB-UniRule"/>
</dbReference>
<dbReference type="GO" id="GO:0047294">
    <property type="term" value="F:phosphoglycerol geranylgeranyltransferase activity"/>
    <property type="evidence" value="ECO:0007669"/>
    <property type="project" value="UniProtKB-UniRule"/>
</dbReference>
<dbReference type="GO" id="GO:0046474">
    <property type="term" value="P:glycerophospholipid biosynthetic process"/>
    <property type="evidence" value="ECO:0007669"/>
    <property type="project" value="UniProtKB-UniRule"/>
</dbReference>
<dbReference type="CDD" id="cd02812">
    <property type="entry name" value="PcrB_like"/>
    <property type="match status" value="1"/>
</dbReference>
<dbReference type="FunFam" id="3.20.20.390:FF:000001">
    <property type="entry name" value="Heptaprenylglyceryl phosphate synthase"/>
    <property type="match status" value="1"/>
</dbReference>
<dbReference type="Gene3D" id="3.20.20.390">
    <property type="entry name" value="FMN-linked oxidoreductases"/>
    <property type="match status" value="1"/>
</dbReference>
<dbReference type="HAMAP" id="MF_00112">
    <property type="entry name" value="GGGP_HepGP_synthase"/>
    <property type="match status" value="1"/>
</dbReference>
<dbReference type="InterPro" id="IPR038597">
    <property type="entry name" value="GGGP/HepGP_synthase_sf"/>
</dbReference>
<dbReference type="InterPro" id="IPR008205">
    <property type="entry name" value="GGGP_HepGP_synthase"/>
</dbReference>
<dbReference type="InterPro" id="IPR010946">
    <property type="entry name" value="GGGP_synth"/>
</dbReference>
<dbReference type="InterPro" id="IPR050064">
    <property type="entry name" value="IGPS_HisA/HisF"/>
</dbReference>
<dbReference type="NCBIfam" id="TIGR01769">
    <property type="entry name" value="GGGP"/>
    <property type="match status" value="1"/>
</dbReference>
<dbReference type="NCBIfam" id="TIGR01768">
    <property type="entry name" value="GGGP-family"/>
    <property type="match status" value="1"/>
</dbReference>
<dbReference type="NCBIfam" id="NF003198">
    <property type="entry name" value="PRK04169.1-2"/>
    <property type="match status" value="1"/>
</dbReference>
<dbReference type="PANTHER" id="PTHR21235:SF22">
    <property type="entry name" value="GERANYLGERANYLGLYCERYL PHOSPHATE SYNTHASE"/>
    <property type="match status" value="1"/>
</dbReference>
<dbReference type="PANTHER" id="PTHR21235">
    <property type="entry name" value="IMIDAZOLE GLYCEROL PHOSPHATE SYNTHASE SUBUNIT HISF/H IGP SYNTHASE SUBUNIT HISF/H"/>
    <property type="match status" value="1"/>
</dbReference>
<dbReference type="Pfam" id="PF01884">
    <property type="entry name" value="PcrB"/>
    <property type="match status" value="1"/>
</dbReference>
<dbReference type="SUPFAM" id="SSF51395">
    <property type="entry name" value="FMN-linked oxidoreductases"/>
    <property type="match status" value="1"/>
</dbReference>
<accession>Q2NET5</accession>
<organism>
    <name type="scientific">Methanosphaera stadtmanae (strain ATCC 43021 / DSM 3091 / JCM 11832 / MCB-3)</name>
    <dbReference type="NCBI Taxonomy" id="339860"/>
    <lineage>
        <taxon>Archaea</taxon>
        <taxon>Methanobacteriati</taxon>
        <taxon>Methanobacteriota</taxon>
        <taxon>Methanomada group</taxon>
        <taxon>Methanobacteria</taxon>
        <taxon>Methanobacteriales</taxon>
        <taxon>Methanobacteriaceae</taxon>
        <taxon>Methanosphaera</taxon>
    </lineage>
</organism>
<keyword id="KW-0963">Cytoplasm</keyword>
<keyword id="KW-0444">Lipid biosynthesis</keyword>
<keyword id="KW-0443">Lipid metabolism</keyword>
<keyword id="KW-0460">Magnesium</keyword>
<keyword id="KW-0479">Metal-binding</keyword>
<keyword id="KW-0594">Phospholipid biosynthesis</keyword>
<keyword id="KW-1208">Phospholipid metabolism</keyword>
<keyword id="KW-1185">Reference proteome</keyword>
<keyword id="KW-0808">Transferase</keyword>